<reference key="1">
    <citation type="submission" date="2007-04" db="EMBL/GenBank/DDBJ databases">
        <title>Complete sequence of Roseiflexus sp. RS-1.</title>
        <authorList>
            <consortium name="US DOE Joint Genome Institute"/>
            <person name="Copeland A."/>
            <person name="Lucas S."/>
            <person name="Lapidus A."/>
            <person name="Barry K."/>
            <person name="Detter J.C."/>
            <person name="Glavina del Rio T."/>
            <person name="Hammon N."/>
            <person name="Israni S."/>
            <person name="Dalin E."/>
            <person name="Tice H."/>
            <person name="Pitluck S."/>
            <person name="Chertkov O."/>
            <person name="Brettin T."/>
            <person name="Bruce D."/>
            <person name="Han C."/>
            <person name="Schmutz J."/>
            <person name="Larimer F."/>
            <person name="Land M."/>
            <person name="Hauser L."/>
            <person name="Kyrpides N."/>
            <person name="Mikhailova N."/>
            <person name="Bryant D.A."/>
            <person name="Richardson P."/>
        </authorList>
    </citation>
    <scope>NUCLEOTIDE SEQUENCE [LARGE SCALE GENOMIC DNA]</scope>
    <source>
        <strain>RS-1</strain>
    </source>
</reference>
<dbReference type="EMBL" id="CP000686">
    <property type="protein sequence ID" value="ABQ89926.1"/>
    <property type="molecule type" value="Genomic_DNA"/>
</dbReference>
<dbReference type="RefSeq" id="WP_011956275.1">
    <property type="nucleotide sequence ID" value="NC_009523.1"/>
</dbReference>
<dbReference type="SMR" id="A5UTH3"/>
<dbReference type="STRING" id="357808.RoseRS_1533"/>
<dbReference type="KEGG" id="rrs:RoseRS_1533"/>
<dbReference type="eggNOG" id="COG0353">
    <property type="taxonomic scope" value="Bacteria"/>
</dbReference>
<dbReference type="HOGENOM" id="CLU_060739_1_0_0"/>
<dbReference type="OrthoDB" id="9802672at2"/>
<dbReference type="Proteomes" id="UP000006554">
    <property type="component" value="Chromosome"/>
</dbReference>
<dbReference type="GO" id="GO:0003677">
    <property type="term" value="F:DNA binding"/>
    <property type="evidence" value="ECO:0007669"/>
    <property type="project" value="UniProtKB-UniRule"/>
</dbReference>
<dbReference type="GO" id="GO:0008270">
    <property type="term" value="F:zinc ion binding"/>
    <property type="evidence" value="ECO:0007669"/>
    <property type="project" value="UniProtKB-KW"/>
</dbReference>
<dbReference type="GO" id="GO:0006310">
    <property type="term" value="P:DNA recombination"/>
    <property type="evidence" value="ECO:0007669"/>
    <property type="project" value="UniProtKB-UniRule"/>
</dbReference>
<dbReference type="GO" id="GO:0006281">
    <property type="term" value="P:DNA repair"/>
    <property type="evidence" value="ECO:0007669"/>
    <property type="project" value="UniProtKB-UniRule"/>
</dbReference>
<dbReference type="CDD" id="cd01025">
    <property type="entry name" value="TOPRIM_recR"/>
    <property type="match status" value="1"/>
</dbReference>
<dbReference type="Gene3D" id="3.40.1360.10">
    <property type="match status" value="1"/>
</dbReference>
<dbReference type="Gene3D" id="6.10.250.240">
    <property type="match status" value="1"/>
</dbReference>
<dbReference type="Gene3D" id="1.10.8.420">
    <property type="entry name" value="RecR Domain 1"/>
    <property type="match status" value="1"/>
</dbReference>
<dbReference type="HAMAP" id="MF_00017">
    <property type="entry name" value="RecR"/>
    <property type="match status" value="1"/>
</dbReference>
<dbReference type="InterPro" id="IPR000093">
    <property type="entry name" value="DNA_Rcmb_RecR"/>
</dbReference>
<dbReference type="InterPro" id="IPR023627">
    <property type="entry name" value="Rcmb_RecR"/>
</dbReference>
<dbReference type="InterPro" id="IPR015967">
    <property type="entry name" value="Rcmb_RecR_Znf"/>
</dbReference>
<dbReference type="InterPro" id="IPR006171">
    <property type="entry name" value="TOPRIM_dom"/>
</dbReference>
<dbReference type="InterPro" id="IPR034137">
    <property type="entry name" value="TOPRIM_RecR"/>
</dbReference>
<dbReference type="NCBIfam" id="TIGR00615">
    <property type="entry name" value="recR"/>
    <property type="match status" value="1"/>
</dbReference>
<dbReference type="PANTHER" id="PTHR30446">
    <property type="entry name" value="RECOMBINATION PROTEIN RECR"/>
    <property type="match status" value="1"/>
</dbReference>
<dbReference type="PANTHER" id="PTHR30446:SF0">
    <property type="entry name" value="RECOMBINATION PROTEIN RECR"/>
    <property type="match status" value="1"/>
</dbReference>
<dbReference type="Pfam" id="PF21175">
    <property type="entry name" value="RecR_C"/>
    <property type="match status" value="1"/>
</dbReference>
<dbReference type="Pfam" id="PF21176">
    <property type="entry name" value="RecR_HhH"/>
    <property type="match status" value="1"/>
</dbReference>
<dbReference type="Pfam" id="PF02132">
    <property type="entry name" value="RecR_ZnF"/>
    <property type="match status" value="1"/>
</dbReference>
<dbReference type="Pfam" id="PF13662">
    <property type="entry name" value="Toprim_4"/>
    <property type="match status" value="1"/>
</dbReference>
<dbReference type="SMART" id="SM00493">
    <property type="entry name" value="TOPRIM"/>
    <property type="match status" value="1"/>
</dbReference>
<dbReference type="SUPFAM" id="SSF111304">
    <property type="entry name" value="Recombination protein RecR"/>
    <property type="match status" value="1"/>
</dbReference>
<dbReference type="PROSITE" id="PS01300">
    <property type="entry name" value="RECR"/>
    <property type="match status" value="1"/>
</dbReference>
<dbReference type="PROSITE" id="PS50880">
    <property type="entry name" value="TOPRIM"/>
    <property type="match status" value="1"/>
</dbReference>
<proteinExistence type="inferred from homology"/>
<name>RECR_ROSS1</name>
<comment type="function">
    <text evidence="1">May play a role in DNA repair. It seems to be involved in an RecBC-independent recombinational process of DNA repair. It may act with RecF and RecO.</text>
</comment>
<comment type="similarity">
    <text evidence="1">Belongs to the RecR family.</text>
</comment>
<protein>
    <recommendedName>
        <fullName evidence="1">Recombination protein RecR</fullName>
    </recommendedName>
</protein>
<evidence type="ECO:0000255" key="1">
    <source>
        <dbReference type="HAMAP-Rule" id="MF_00017"/>
    </source>
</evidence>
<sequence>MHQTHDIQILPAPVIRLIEELNRLPGVGPKTASRLTFFLLRAPDDLPLALAHALTALKQQVQLCSRCYFITQGDLCAICANPARDQRVICVVEEPLDVVAIERTGVYRGLYHVLHGRIAPLEGMNREDIYFDELLDRVRAEPVEEVIIATNPNLEGEATAFHLQRALAPLGVRVTRLARGLPTGGDLEWADPGTLGSALEGRREM</sequence>
<feature type="chain" id="PRO_0000322948" description="Recombination protein RecR">
    <location>
        <begin position="1"/>
        <end position="205"/>
    </location>
</feature>
<feature type="domain" description="Toprim" evidence="1">
    <location>
        <begin position="87"/>
        <end position="182"/>
    </location>
</feature>
<feature type="zinc finger region" description="C4-type" evidence="1">
    <location>
        <begin position="64"/>
        <end position="79"/>
    </location>
</feature>
<organism>
    <name type="scientific">Roseiflexus sp. (strain RS-1)</name>
    <dbReference type="NCBI Taxonomy" id="357808"/>
    <lineage>
        <taxon>Bacteria</taxon>
        <taxon>Bacillati</taxon>
        <taxon>Chloroflexota</taxon>
        <taxon>Chloroflexia</taxon>
        <taxon>Chloroflexales</taxon>
        <taxon>Roseiflexineae</taxon>
        <taxon>Roseiflexaceae</taxon>
        <taxon>Roseiflexus</taxon>
    </lineage>
</organism>
<keyword id="KW-0227">DNA damage</keyword>
<keyword id="KW-0233">DNA recombination</keyword>
<keyword id="KW-0234">DNA repair</keyword>
<keyword id="KW-0479">Metal-binding</keyword>
<keyword id="KW-0862">Zinc</keyword>
<keyword id="KW-0863">Zinc-finger</keyword>
<accession>A5UTH3</accession>
<gene>
    <name evidence="1" type="primary">recR</name>
    <name type="ordered locus">RoseRS_1533</name>
</gene>